<comment type="function">
    <text evidence="1">One of the primary rRNA binding proteins, it binds directly to 16S rRNA where it nucleates assembly of the body of the 30S subunit.</text>
</comment>
<comment type="function">
    <text evidence="1">With S5 and S12 plays an important role in translational accuracy.</text>
</comment>
<comment type="subunit">
    <text evidence="1">Part of the 30S ribosomal subunit. Contacts protein S5. The interaction surface between S4 and S5 is involved in control of translational fidelity.</text>
</comment>
<comment type="similarity">
    <text evidence="1">Belongs to the universal ribosomal protein uS4 family.</text>
</comment>
<dbReference type="EMBL" id="CP000967">
    <property type="protein sequence ID" value="ACD57910.1"/>
    <property type="molecule type" value="Genomic_DNA"/>
</dbReference>
<dbReference type="RefSeq" id="WP_011260018.1">
    <property type="nucleotide sequence ID" value="NC_010717.2"/>
</dbReference>
<dbReference type="SMR" id="B2SQT3"/>
<dbReference type="GeneID" id="77338690"/>
<dbReference type="KEGG" id="xop:PXO_04497"/>
<dbReference type="eggNOG" id="COG0522">
    <property type="taxonomic scope" value="Bacteria"/>
</dbReference>
<dbReference type="HOGENOM" id="CLU_092403_0_2_6"/>
<dbReference type="Proteomes" id="UP000001740">
    <property type="component" value="Chromosome"/>
</dbReference>
<dbReference type="GO" id="GO:0015935">
    <property type="term" value="C:small ribosomal subunit"/>
    <property type="evidence" value="ECO:0007669"/>
    <property type="project" value="InterPro"/>
</dbReference>
<dbReference type="GO" id="GO:0019843">
    <property type="term" value="F:rRNA binding"/>
    <property type="evidence" value="ECO:0007669"/>
    <property type="project" value="UniProtKB-UniRule"/>
</dbReference>
<dbReference type="GO" id="GO:0003735">
    <property type="term" value="F:structural constituent of ribosome"/>
    <property type="evidence" value="ECO:0007669"/>
    <property type="project" value="InterPro"/>
</dbReference>
<dbReference type="GO" id="GO:0042274">
    <property type="term" value="P:ribosomal small subunit biogenesis"/>
    <property type="evidence" value="ECO:0007669"/>
    <property type="project" value="TreeGrafter"/>
</dbReference>
<dbReference type="GO" id="GO:0006412">
    <property type="term" value="P:translation"/>
    <property type="evidence" value="ECO:0007669"/>
    <property type="project" value="UniProtKB-UniRule"/>
</dbReference>
<dbReference type="CDD" id="cd00165">
    <property type="entry name" value="S4"/>
    <property type="match status" value="1"/>
</dbReference>
<dbReference type="FunFam" id="1.10.1050.10:FF:000001">
    <property type="entry name" value="30S ribosomal protein S4"/>
    <property type="match status" value="1"/>
</dbReference>
<dbReference type="FunFam" id="3.10.290.10:FF:000001">
    <property type="entry name" value="30S ribosomal protein S4"/>
    <property type="match status" value="1"/>
</dbReference>
<dbReference type="Gene3D" id="1.10.1050.10">
    <property type="entry name" value="Ribosomal Protein S4 Delta 41, Chain A, domain 1"/>
    <property type="match status" value="1"/>
</dbReference>
<dbReference type="Gene3D" id="3.10.290.10">
    <property type="entry name" value="RNA-binding S4 domain"/>
    <property type="match status" value="1"/>
</dbReference>
<dbReference type="HAMAP" id="MF_01306_B">
    <property type="entry name" value="Ribosomal_uS4_B"/>
    <property type="match status" value="1"/>
</dbReference>
<dbReference type="InterPro" id="IPR022801">
    <property type="entry name" value="Ribosomal_uS4"/>
</dbReference>
<dbReference type="InterPro" id="IPR005709">
    <property type="entry name" value="Ribosomal_uS4_bac-type"/>
</dbReference>
<dbReference type="InterPro" id="IPR018079">
    <property type="entry name" value="Ribosomal_uS4_CS"/>
</dbReference>
<dbReference type="InterPro" id="IPR001912">
    <property type="entry name" value="Ribosomal_uS4_N"/>
</dbReference>
<dbReference type="InterPro" id="IPR002942">
    <property type="entry name" value="S4_RNA-bd"/>
</dbReference>
<dbReference type="InterPro" id="IPR036986">
    <property type="entry name" value="S4_RNA-bd_sf"/>
</dbReference>
<dbReference type="NCBIfam" id="NF003717">
    <property type="entry name" value="PRK05327.1"/>
    <property type="match status" value="1"/>
</dbReference>
<dbReference type="NCBIfam" id="TIGR01017">
    <property type="entry name" value="rpsD_bact"/>
    <property type="match status" value="1"/>
</dbReference>
<dbReference type="PANTHER" id="PTHR11831">
    <property type="entry name" value="30S 40S RIBOSOMAL PROTEIN"/>
    <property type="match status" value="1"/>
</dbReference>
<dbReference type="PANTHER" id="PTHR11831:SF4">
    <property type="entry name" value="SMALL RIBOSOMAL SUBUNIT PROTEIN US4M"/>
    <property type="match status" value="1"/>
</dbReference>
<dbReference type="Pfam" id="PF00163">
    <property type="entry name" value="Ribosomal_S4"/>
    <property type="match status" value="1"/>
</dbReference>
<dbReference type="Pfam" id="PF01479">
    <property type="entry name" value="S4"/>
    <property type="match status" value="1"/>
</dbReference>
<dbReference type="SMART" id="SM01390">
    <property type="entry name" value="Ribosomal_S4"/>
    <property type="match status" value="1"/>
</dbReference>
<dbReference type="SMART" id="SM00363">
    <property type="entry name" value="S4"/>
    <property type="match status" value="1"/>
</dbReference>
<dbReference type="SUPFAM" id="SSF55174">
    <property type="entry name" value="Alpha-L RNA-binding motif"/>
    <property type="match status" value="1"/>
</dbReference>
<dbReference type="PROSITE" id="PS00632">
    <property type="entry name" value="RIBOSOMAL_S4"/>
    <property type="match status" value="1"/>
</dbReference>
<dbReference type="PROSITE" id="PS50889">
    <property type="entry name" value="S4"/>
    <property type="match status" value="1"/>
</dbReference>
<sequence>MARYIGPTCKLARREGADLSLKSPARALDSKCKLEQKPGQHGASRKGKLSDYATQLREKQKVKRIYGLLERQFRNYYKKASTKKGNTGENLLQLLETRLDNVCYRMGFAVTRPAARQLVSHRCVLVNGKSVNLASYQIKAGDAITLSEKAQKQLRVQEALTVAEQHDMTPSWVEVDSKKFSGVFKAVPDRADLPSDINEALIVELYSK</sequence>
<protein>
    <recommendedName>
        <fullName evidence="1">Small ribosomal subunit protein uS4</fullName>
    </recommendedName>
    <alternativeName>
        <fullName evidence="2">30S ribosomal protein S4</fullName>
    </alternativeName>
</protein>
<feature type="chain" id="PRO_1000140818" description="Small ribosomal subunit protein uS4">
    <location>
        <begin position="1"/>
        <end position="208"/>
    </location>
</feature>
<feature type="domain" description="S4 RNA-binding" evidence="1">
    <location>
        <begin position="97"/>
        <end position="160"/>
    </location>
</feature>
<name>RS4_XANOP</name>
<gene>
    <name evidence="1" type="primary">rpsD</name>
    <name type="ordered locus">PXO_04497</name>
</gene>
<evidence type="ECO:0000255" key="1">
    <source>
        <dbReference type="HAMAP-Rule" id="MF_01306"/>
    </source>
</evidence>
<evidence type="ECO:0000305" key="2"/>
<reference key="1">
    <citation type="journal article" date="2008" name="BMC Genomics">
        <title>Genome sequence and rapid evolution of the rice pathogen Xanthomonas oryzae pv. oryzae PXO99A.</title>
        <authorList>
            <person name="Salzberg S.L."/>
            <person name="Sommer D.D."/>
            <person name="Schatz M.C."/>
            <person name="Phillippy A.M."/>
            <person name="Rabinowicz P.D."/>
            <person name="Tsuge S."/>
            <person name="Furutani A."/>
            <person name="Ochiai H."/>
            <person name="Delcher A.L."/>
            <person name="Kelley D."/>
            <person name="Madupu R."/>
            <person name="Puiu D."/>
            <person name="Radune D."/>
            <person name="Shumway M."/>
            <person name="Trapnell C."/>
            <person name="Aparna G."/>
            <person name="Jha G."/>
            <person name="Pandey A."/>
            <person name="Patil P.B."/>
            <person name="Ishihara H."/>
            <person name="Meyer D.F."/>
            <person name="Szurek B."/>
            <person name="Verdier V."/>
            <person name="Koebnik R."/>
            <person name="Dow J.M."/>
            <person name="Ryan R.P."/>
            <person name="Hirata H."/>
            <person name="Tsuyumu S."/>
            <person name="Won Lee S."/>
            <person name="Seo Y.-S."/>
            <person name="Sriariyanum M."/>
            <person name="Ronald P.C."/>
            <person name="Sonti R.V."/>
            <person name="Van Sluys M.-A."/>
            <person name="Leach J.E."/>
            <person name="White F.F."/>
            <person name="Bogdanove A.J."/>
        </authorList>
    </citation>
    <scope>NUCLEOTIDE SEQUENCE [LARGE SCALE GENOMIC DNA]</scope>
    <source>
        <strain>PXO99A</strain>
    </source>
</reference>
<keyword id="KW-0687">Ribonucleoprotein</keyword>
<keyword id="KW-0689">Ribosomal protein</keyword>
<keyword id="KW-0694">RNA-binding</keyword>
<keyword id="KW-0699">rRNA-binding</keyword>
<accession>B2SQT3</accession>
<organism>
    <name type="scientific">Xanthomonas oryzae pv. oryzae (strain PXO99A)</name>
    <dbReference type="NCBI Taxonomy" id="360094"/>
    <lineage>
        <taxon>Bacteria</taxon>
        <taxon>Pseudomonadati</taxon>
        <taxon>Pseudomonadota</taxon>
        <taxon>Gammaproteobacteria</taxon>
        <taxon>Lysobacterales</taxon>
        <taxon>Lysobacteraceae</taxon>
        <taxon>Xanthomonas</taxon>
    </lineage>
</organism>
<proteinExistence type="inferred from homology"/>